<proteinExistence type="inferred from homology"/>
<dbReference type="EC" id="6.1.1.10" evidence="1"/>
<dbReference type="EMBL" id="CP000661">
    <property type="protein sequence ID" value="ABP71238.1"/>
    <property type="molecule type" value="Genomic_DNA"/>
</dbReference>
<dbReference type="SMR" id="A4WV24"/>
<dbReference type="STRING" id="349102.Rsph17025_2349"/>
<dbReference type="KEGG" id="rsq:Rsph17025_2349"/>
<dbReference type="eggNOG" id="COG0143">
    <property type="taxonomic scope" value="Bacteria"/>
</dbReference>
<dbReference type="HOGENOM" id="CLU_009710_3_2_5"/>
<dbReference type="BioCyc" id="RSPH349102:G1G8M-2424-MONOMER"/>
<dbReference type="GO" id="GO:0017101">
    <property type="term" value="C:aminoacyl-tRNA synthetase multienzyme complex"/>
    <property type="evidence" value="ECO:0007669"/>
    <property type="project" value="TreeGrafter"/>
</dbReference>
<dbReference type="GO" id="GO:0005829">
    <property type="term" value="C:cytosol"/>
    <property type="evidence" value="ECO:0007669"/>
    <property type="project" value="TreeGrafter"/>
</dbReference>
<dbReference type="GO" id="GO:0005524">
    <property type="term" value="F:ATP binding"/>
    <property type="evidence" value="ECO:0007669"/>
    <property type="project" value="UniProtKB-UniRule"/>
</dbReference>
<dbReference type="GO" id="GO:0046872">
    <property type="term" value="F:metal ion binding"/>
    <property type="evidence" value="ECO:0007669"/>
    <property type="project" value="UniProtKB-KW"/>
</dbReference>
<dbReference type="GO" id="GO:0004825">
    <property type="term" value="F:methionine-tRNA ligase activity"/>
    <property type="evidence" value="ECO:0007669"/>
    <property type="project" value="UniProtKB-UniRule"/>
</dbReference>
<dbReference type="GO" id="GO:0006431">
    <property type="term" value="P:methionyl-tRNA aminoacylation"/>
    <property type="evidence" value="ECO:0007669"/>
    <property type="project" value="UniProtKB-UniRule"/>
</dbReference>
<dbReference type="CDD" id="cd07957">
    <property type="entry name" value="Anticodon_Ia_Met"/>
    <property type="match status" value="1"/>
</dbReference>
<dbReference type="CDD" id="cd00814">
    <property type="entry name" value="MetRS_core"/>
    <property type="match status" value="1"/>
</dbReference>
<dbReference type="FunFam" id="2.20.28.20:FF:000001">
    <property type="entry name" value="Methionine--tRNA ligase"/>
    <property type="match status" value="1"/>
</dbReference>
<dbReference type="Gene3D" id="3.40.50.620">
    <property type="entry name" value="HUPs"/>
    <property type="match status" value="1"/>
</dbReference>
<dbReference type="Gene3D" id="1.10.730.10">
    <property type="entry name" value="Isoleucyl-tRNA Synthetase, Domain 1"/>
    <property type="match status" value="1"/>
</dbReference>
<dbReference type="Gene3D" id="2.20.28.20">
    <property type="entry name" value="Methionyl-tRNA synthetase, Zn-domain"/>
    <property type="match status" value="1"/>
</dbReference>
<dbReference type="HAMAP" id="MF_00098">
    <property type="entry name" value="Met_tRNA_synth_type1"/>
    <property type="match status" value="1"/>
</dbReference>
<dbReference type="InterPro" id="IPR041872">
    <property type="entry name" value="Anticodon_Met"/>
</dbReference>
<dbReference type="InterPro" id="IPR023458">
    <property type="entry name" value="Met-tRNA_ligase_1"/>
</dbReference>
<dbReference type="InterPro" id="IPR014758">
    <property type="entry name" value="Met-tRNA_synth"/>
</dbReference>
<dbReference type="InterPro" id="IPR015413">
    <property type="entry name" value="Methionyl/Leucyl_tRNA_Synth"/>
</dbReference>
<dbReference type="InterPro" id="IPR033911">
    <property type="entry name" value="MetRS_core"/>
</dbReference>
<dbReference type="InterPro" id="IPR029038">
    <property type="entry name" value="MetRS_Zn"/>
</dbReference>
<dbReference type="InterPro" id="IPR014729">
    <property type="entry name" value="Rossmann-like_a/b/a_fold"/>
</dbReference>
<dbReference type="InterPro" id="IPR009080">
    <property type="entry name" value="tRNAsynth_Ia_anticodon-bd"/>
</dbReference>
<dbReference type="NCBIfam" id="TIGR00398">
    <property type="entry name" value="metG"/>
    <property type="match status" value="1"/>
</dbReference>
<dbReference type="PANTHER" id="PTHR45765">
    <property type="entry name" value="METHIONINE--TRNA LIGASE"/>
    <property type="match status" value="1"/>
</dbReference>
<dbReference type="PANTHER" id="PTHR45765:SF1">
    <property type="entry name" value="METHIONINE--TRNA LIGASE, CYTOPLASMIC"/>
    <property type="match status" value="1"/>
</dbReference>
<dbReference type="Pfam" id="PF19303">
    <property type="entry name" value="Anticodon_3"/>
    <property type="match status" value="1"/>
</dbReference>
<dbReference type="Pfam" id="PF09334">
    <property type="entry name" value="tRNA-synt_1g"/>
    <property type="match status" value="1"/>
</dbReference>
<dbReference type="PRINTS" id="PR01041">
    <property type="entry name" value="TRNASYNTHMET"/>
</dbReference>
<dbReference type="SUPFAM" id="SSF47323">
    <property type="entry name" value="Anticodon-binding domain of a subclass of class I aminoacyl-tRNA synthetases"/>
    <property type="match status" value="1"/>
</dbReference>
<dbReference type="SUPFAM" id="SSF57770">
    <property type="entry name" value="Methionyl-tRNA synthetase (MetRS), Zn-domain"/>
    <property type="match status" value="1"/>
</dbReference>
<dbReference type="SUPFAM" id="SSF52374">
    <property type="entry name" value="Nucleotidylyl transferase"/>
    <property type="match status" value="1"/>
</dbReference>
<keyword id="KW-0030">Aminoacyl-tRNA synthetase</keyword>
<keyword id="KW-0067">ATP-binding</keyword>
<keyword id="KW-0963">Cytoplasm</keyword>
<keyword id="KW-0436">Ligase</keyword>
<keyword id="KW-0479">Metal-binding</keyword>
<keyword id="KW-0547">Nucleotide-binding</keyword>
<keyword id="KW-0648">Protein biosynthesis</keyword>
<keyword id="KW-0862">Zinc</keyword>
<evidence type="ECO:0000255" key="1">
    <source>
        <dbReference type="HAMAP-Rule" id="MF_00098"/>
    </source>
</evidence>
<reference key="1">
    <citation type="submission" date="2007-04" db="EMBL/GenBank/DDBJ databases">
        <title>Complete sequence of chromosome of Rhodobacter sphaeroides ATCC 17025.</title>
        <authorList>
            <consortium name="US DOE Joint Genome Institute"/>
            <person name="Copeland A."/>
            <person name="Lucas S."/>
            <person name="Lapidus A."/>
            <person name="Barry K."/>
            <person name="Detter J.C."/>
            <person name="Glavina del Rio T."/>
            <person name="Hammon N."/>
            <person name="Israni S."/>
            <person name="Dalin E."/>
            <person name="Tice H."/>
            <person name="Pitluck S."/>
            <person name="Chertkov O."/>
            <person name="Brettin T."/>
            <person name="Bruce D."/>
            <person name="Han C."/>
            <person name="Schmutz J."/>
            <person name="Larimer F."/>
            <person name="Land M."/>
            <person name="Hauser L."/>
            <person name="Kyrpides N."/>
            <person name="Kim E."/>
            <person name="Richardson P."/>
            <person name="Mackenzie C."/>
            <person name="Choudhary M."/>
            <person name="Donohue T.J."/>
            <person name="Kaplan S."/>
        </authorList>
    </citation>
    <scope>NUCLEOTIDE SEQUENCE [LARGE SCALE GENOMIC DNA]</scope>
    <source>
        <strain>ATCC 17025 / ATH 2.4.3</strain>
    </source>
</reference>
<accession>A4WV24</accession>
<sequence length="572" mass="64555">MARILITSAIPYINGIKHLGNLVGSQLPADLYARYMRGRGHEVMFICATDEHGTPAELAAAKAGKPVEVYCAEMHEIQKEIAAGFRLSFDHFGRSSSARNHRLTQHFAGQLAENGFIEEVSERQVFSVADNRFLPDRYIEGTCPNCGYDKARGDQCENCTKQLDPTDLINPRSAISGSTDLEVRETKHLYLRQRALKDEIEAWIDSKTDWPVLTTSIAKKWLHDGEGLQDRGITRDLHWGVPVKKGDQPWPGMEGKVFYVWFDAPIEYIAGTAEWADANGKTEADWERWWRTDKGAGDVRYVQFMGKDNVPFHTLSFPATIMGSREPWKLVDYIKSFNYLNYDGGQFSTSQGRGVFMDQALSILPADYWRWWLLSHAPENSDSEFTWENFQASVNKDLADVLGNLVSRVTKFCRSKFGETVPAGGAFGEREHQLIAELQERLAAYESCMEAMEIRKAATELRALWVAGNEYLQSAAPWTVVKTDPERAQAMIRLSLNLIRLYAVISRPFIPDAAASTMASLGCDDWSWPTDVAAALERLPAGHAFTTPDVLFRKITDEERAEWQTRFAGVRT</sequence>
<protein>
    <recommendedName>
        <fullName evidence="1">Methionine--tRNA ligase</fullName>
        <ecNumber evidence="1">6.1.1.10</ecNumber>
    </recommendedName>
    <alternativeName>
        <fullName evidence="1">Methionyl-tRNA synthetase</fullName>
        <shortName evidence="1">MetRS</shortName>
    </alternativeName>
</protein>
<comment type="function">
    <text evidence="1">Is required not only for elongation of protein synthesis but also for the initiation of all mRNA translation through initiator tRNA(fMet) aminoacylation.</text>
</comment>
<comment type="catalytic activity">
    <reaction evidence="1">
        <text>tRNA(Met) + L-methionine + ATP = L-methionyl-tRNA(Met) + AMP + diphosphate</text>
        <dbReference type="Rhea" id="RHEA:13481"/>
        <dbReference type="Rhea" id="RHEA-COMP:9667"/>
        <dbReference type="Rhea" id="RHEA-COMP:9698"/>
        <dbReference type="ChEBI" id="CHEBI:30616"/>
        <dbReference type="ChEBI" id="CHEBI:33019"/>
        <dbReference type="ChEBI" id="CHEBI:57844"/>
        <dbReference type="ChEBI" id="CHEBI:78442"/>
        <dbReference type="ChEBI" id="CHEBI:78530"/>
        <dbReference type="ChEBI" id="CHEBI:456215"/>
        <dbReference type="EC" id="6.1.1.10"/>
    </reaction>
</comment>
<comment type="cofactor">
    <cofactor evidence="1">
        <name>Zn(2+)</name>
        <dbReference type="ChEBI" id="CHEBI:29105"/>
    </cofactor>
    <text evidence="1">Binds 1 zinc ion per subunit.</text>
</comment>
<comment type="subunit">
    <text evidence="1">Monomer.</text>
</comment>
<comment type="subcellular location">
    <subcellularLocation>
        <location evidence="1">Cytoplasm</location>
    </subcellularLocation>
</comment>
<comment type="similarity">
    <text evidence="1">Belongs to the class-I aminoacyl-tRNA synthetase family. MetG type 1 subfamily.</text>
</comment>
<feature type="chain" id="PRO_0000331886" description="Methionine--tRNA ligase">
    <location>
        <begin position="1"/>
        <end position="572"/>
    </location>
</feature>
<feature type="short sequence motif" description="'HIGH' region">
    <location>
        <begin position="11"/>
        <end position="21"/>
    </location>
</feature>
<feature type="short sequence motif" description="'KMSKS' region">
    <location>
        <begin position="346"/>
        <end position="350"/>
    </location>
</feature>
<feature type="binding site" evidence="1">
    <location>
        <position position="143"/>
    </location>
    <ligand>
        <name>Zn(2+)</name>
        <dbReference type="ChEBI" id="CHEBI:29105"/>
    </ligand>
</feature>
<feature type="binding site" evidence="1">
    <location>
        <position position="146"/>
    </location>
    <ligand>
        <name>Zn(2+)</name>
        <dbReference type="ChEBI" id="CHEBI:29105"/>
    </ligand>
</feature>
<feature type="binding site" evidence="1">
    <location>
        <position position="156"/>
    </location>
    <ligand>
        <name>Zn(2+)</name>
        <dbReference type="ChEBI" id="CHEBI:29105"/>
    </ligand>
</feature>
<feature type="binding site" evidence="1">
    <location>
        <position position="159"/>
    </location>
    <ligand>
        <name>Zn(2+)</name>
        <dbReference type="ChEBI" id="CHEBI:29105"/>
    </ligand>
</feature>
<feature type="binding site" evidence="1">
    <location>
        <position position="349"/>
    </location>
    <ligand>
        <name>ATP</name>
        <dbReference type="ChEBI" id="CHEBI:30616"/>
    </ligand>
</feature>
<organism>
    <name type="scientific">Cereibacter sphaeroides (strain ATCC 17025 / ATH 2.4.3)</name>
    <name type="common">Rhodobacter sphaeroides</name>
    <dbReference type="NCBI Taxonomy" id="349102"/>
    <lineage>
        <taxon>Bacteria</taxon>
        <taxon>Pseudomonadati</taxon>
        <taxon>Pseudomonadota</taxon>
        <taxon>Alphaproteobacteria</taxon>
        <taxon>Rhodobacterales</taxon>
        <taxon>Paracoccaceae</taxon>
        <taxon>Cereibacter</taxon>
    </lineage>
</organism>
<name>SYM_CERS5</name>
<gene>
    <name evidence="1" type="primary">metG</name>
    <name type="ordered locus">Rsph17025_2349</name>
</gene>